<dbReference type="EC" id="3.2.1.-"/>
<dbReference type="EMBL" id="DQ115392">
    <property type="protein sequence ID" value="AAZ22504.1"/>
    <property type="molecule type" value="Genomic_DNA"/>
</dbReference>
<dbReference type="EMBL" id="Z46833">
    <property type="protein sequence ID" value="CAA86869.1"/>
    <property type="molecule type" value="Genomic_DNA"/>
</dbReference>
<dbReference type="EMBL" id="AY245795">
    <property type="protein sequence ID" value="AAP04345.1"/>
    <property type="molecule type" value="mRNA"/>
</dbReference>
<dbReference type="EMBL" id="EF123134">
    <property type="protein sequence ID" value="ABM97478.1"/>
    <property type="molecule type" value="mRNA"/>
</dbReference>
<dbReference type="EMBL" id="BK006942">
    <property type="protein sequence ID" value="DAA08430.2"/>
    <property type="molecule type" value="Genomic_DNA"/>
</dbReference>
<dbReference type="PIR" id="S49886">
    <property type="entry name" value="S49886"/>
</dbReference>
<dbReference type="RefSeq" id="NP_012143.2">
    <property type="nucleotide sequence ID" value="NM_001179471.2"/>
</dbReference>
<dbReference type="BioGRID" id="34868">
    <property type="interactions" value="98"/>
</dbReference>
<dbReference type="FunCoup" id="P40472">
    <property type="interactions" value="81"/>
</dbReference>
<dbReference type="IntAct" id="P40472">
    <property type="interactions" value="2"/>
</dbReference>
<dbReference type="STRING" id="4932.YIL123W"/>
<dbReference type="GlyCosmos" id="P40472">
    <property type="glycosylation" value="1 site, No reported glycans"/>
</dbReference>
<dbReference type="GlyGen" id="P40472">
    <property type="glycosylation" value="2 sites"/>
</dbReference>
<dbReference type="PaxDb" id="4932-YIL123W"/>
<dbReference type="PeptideAtlas" id="P40472"/>
<dbReference type="EnsemblFungi" id="YIL123W_mRNA">
    <property type="protein sequence ID" value="YIL123W"/>
    <property type="gene ID" value="YIL123W"/>
</dbReference>
<dbReference type="GeneID" id="854683"/>
<dbReference type="KEGG" id="sce:YIL123W"/>
<dbReference type="AGR" id="SGD:S000001385"/>
<dbReference type="SGD" id="S000001385">
    <property type="gene designation" value="SIM1"/>
</dbReference>
<dbReference type="VEuPathDB" id="FungiDB:YIL123W"/>
<dbReference type="eggNOG" id="ENOG502QPVV">
    <property type="taxonomic scope" value="Eukaryota"/>
</dbReference>
<dbReference type="GeneTree" id="ENSGT00940000176328"/>
<dbReference type="HOGENOM" id="CLU_033459_2_0_1"/>
<dbReference type="InParanoid" id="P40472"/>
<dbReference type="OMA" id="CSYACQS"/>
<dbReference type="OrthoDB" id="5339822at2759"/>
<dbReference type="BioCyc" id="YEAST:G3O-31376-MONOMER"/>
<dbReference type="BioGRID-ORCS" id="854683">
    <property type="hits" value="5 hits in 10 CRISPR screens"/>
</dbReference>
<dbReference type="PRO" id="PR:P40472"/>
<dbReference type="Proteomes" id="UP000002311">
    <property type="component" value="Chromosome IX"/>
</dbReference>
<dbReference type="RNAct" id="P40472">
    <property type="molecule type" value="protein"/>
</dbReference>
<dbReference type="GO" id="GO:0009986">
    <property type="term" value="C:cell surface"/>
    <property type="evidence" value="ECO:0000318"/>
    <property type="project" value="GO_Central"/>
</dbReference>
<dbReference type="GO" id="GO:0005783">
    <property type="term" value="C:endoplasmic reticulum"/>
    <property type="evidence" value="ECO:0007005"/>
    <property type="project" value="SGD"/>
</dbReference>
<dbReference type="GO" id="GO:0005576">
    <property type="term" value="C:extracellular region"/>
    <property type="evidence" value="ECO:0007669"/>
    <property type="project" value="UniProtKB-KW"/>
</dbReference>
<dbReference type="GO" id="GO:0009277">
    <property type="term" value="C:fungal-type cell wall"/>
    <property type="evidence" value="ECO:0000314"/>
    <property type="project" value="SGD"/>
</dbReference>
<dbReference type="GO" id="GO:0016798">
    <property type="term" value="F:hydrolase activity, acting on glycosyl bonds"/>
    <property type="evidence" value="ECO:0007669"/>
    <property type="project" value="UniProtKB-KW"/>
</dbReference>
<dbReference type="GO" id="GO:0031505">
    <property type="term" value="P:fungal-type cell wall organization"/>
    <property type="evidence" value="ECO:0000315"/>
    <property type="project" value="SGD"/>
</dbReference>
<dbReference type="GO" id="GO:0000272">
    <property type="term" value="P:polysaccharide catabolic process"/>
    <property type="evidence" value="ECO:0007669"/>
    <property type="project" value="UniProtKB-KW"/>
</dbReference>
<dbReference type="InterPro" id="IPR051526">
    <property type="entry name" value="Beta-Glucosidase_SUN"/>
</dbReference>
<dbReference type="InterPro" id="IPR005556">
    <property type="entry name" value="SUN"/>
</dbReference>
<dbReference type="PANTHER" id="PTHR31316">
    <property type="entry name" value="BETA-GLUCOSIDASE-LIKE PROTEIN NCA3, MITOCHONDRIAL-RELATED"/>
    <property type="match status" value="1"/>
</dbReference>
<dbReference type="PANTHER" id="PTHR31316:SF0">
    <property type="entry name" value="SECRETED BETA-GLUCOSIDASE SIM1-RELATED"/>
    <property type="match status" value="1"/>
</dbReference>
<dbReference type="Pfam" id="PF03856">
    <property type="entry name" value="SUN"/>
    <property type="match status" value="1"/>
</dbReference>
<evidence type="ECO:0000255" key="1"/>
<evidence type="ECO:0000256" key="2">
    <source>
        <dbReference type="SAM" id="MobiDB-lite"/>
    </source>
</evidence>
<evidence type="ECO:0000269" key="3">
    <source>
    </source>
</evidence>
<evidence type="ECO:0000269" key="4">
    <source>
    </source>
</evidence>
<evidence type="ECO:0000269" key="5">
    <source>
    </source>
</evidence>
<evidence type="ECO:0000269" key="6">
    <source>
    </source>
</evidence>
<evidence type="ECO:0000305" key="7"/>
<accession>P40472</accession>
<accession>A2TBN1</accession>
<accession>D6VVG4</accession>
<accession>Q45U06</accession>
<accession>Q870H1</accession>
<name>SIM1_YEAST</name>
<protein>
    <recommendedName>
        <fullName>Probable secreted beta-glucosidase SIM1</fullName>
        <ecNumber>3.2.1.-</ecNumber>
    </recommendedName>
</protein>
<proteinExistence type="evidence at protein level"/>
<organism>
    <name type="scientific">Saccharomyces cerevisiae (strain ATCC 204508 / S288c)</name>
    <name type="common">Baker's yeast</name>
    <dbReference type="NCBI Taxonomy" id="559292"/>
    <lineage>
        <taxon>Eukaryota</taxon>
        <taxon>Fungi</taxon>
        <taxon>Dikarya</taxon>
        <taxon>Ascomycota</taxon>
        <taxon>Saccharomycotina</taxon>
        <taxon>Saccharomycetes</taxon>
        <taxon>Saccharomycetales</taxon>
        <taxon>Saccharomycetaceae</taxon>
        <taxon>Saccharomyces</taxon>
    </lineage>
</organism>
<gene>
    <name type="primary">SIM1</name>
    <name type="synonym">PBP3</name>
    <name type="ordered locus">YIL123W</name>
</gene>
<sequence>MKFSTAVTTLISSGAIVSALPHVDVHQEDAHQHKRAVAYKYVYETVVVDSDGHTVTPAASEVATAATSAIITTSVLAPTSSAAAADSSASIAVSSAALAKNEKISDAAASATASTSQGASSSSSSSSATSTLESSSVSSSSEEAAPTSTVVSTSSATQSSASSATKSSTSSTSPSTSTSTSTSSTSSSSSSSSSSSSSSSGSGSIYGDLADFSGPSEKFQDGTIPCDKFPSGQGVISIDWIGEGGWSGVENTDTSTGGSCKEGSYCSYSCQPGMSKTQWPSDQPSDGRSVGGLLCKNGYLYRSNTDADYLCEWGVEAAYVVSKLSKGVAICRTDYPGTENMVIPTYVEGGSSLPLTVVDQDTYFTWEGKKTSAQYYVNNAGVSVEDGCIWGTSGSGIGNWAPLNFGAGSTGGVTYLSLIPNPNNSDALNYNVKIVAADDSSNVIGECVYENGEFSGGADGCTVSVTSGKAHFVLYN</sequence>
<keyword id="KW-0119">Carbohydrate metabolism</keyword>
<keyword id="KW-0134">Cell wall</keyword>
<keyword id="KW-0961">Cell wall biogenesis/degradation</keyword>
<keyword id="KW-0325">Glycoprotein</keyword>
<keyword id="KW-0326">Glycosidase</keyword>
<keyword id="KW-0378">Hydrolase</keyword>
<keyword id="KW-0624">Polysaccharide degradation</keyword>
<keyword id="KW-1185">Reference proteome</keyword>
<keyword id="KW-0964">Secreted</keyword>
<keyword id="KW-0732">Signal</keyword>
<reference key="1">
    <citation type="journal article" date="2005" name="Nat. Genet.">
        <title>Quantitative trait loci mapped to single-nucleotide resolution in yeast.</title>
        <authorList>
            <person name="Deutschbauer A.M."/>
            <person name="Davis R.W."/>
        </authorList>
    </citation>
    <scope>NUCLEOTIDE SEQUENCE [GENOMIC DNA]</scope>
    <scope>VARIANTS 60-SER--ALA-66 DEL AND 174-PRO--THR-185 DEL</scope>
    <source>
        <strain>SK1</strain>
    </source>
</reference>
<reference key="2">
    <citation type="journal article" date="1997" name="Nature">
        <title>The nucleotide sequence of Saccharomyces cerevisiae chromosome IX.</title>
        <authorList>
            <person name="Churcher C.M."/>
            <person name="Bowman S."/>
            <person name="Badcock K."/>
            <person name="Bankier A.T."/>
            <person name="Brown D."/>
            <person name="Chillingworth T."/>
            <person name="Connor R."/>
            <person name="Devlin K."/>
            <person name="Gentles S."/>
            <person name="Hamlin N."/>
            <person name="Harris D.E."/>
            <person name="Horsnell T."/>
            <person name="Hunt S."/>
            <person name="Jagels K."/>
            <person name="Jones M."/>
            <person name="Lye G."/>
            <person name="Moule S."/>
            <person name="Odell C."/>
            <person name="Pearson D."/>
            <person name="Rajandream M.A."/>
            <person name="Rice P."/>
            <person name="Rowley N."/>
            <person name="Skelton J."/>
            <person name="Smith V."/>
            <person name="Walsh S.V."/>
            <person name="Whitehead S."/>
            <person name="Barrell B.G."/>
        </authorList>
    </citation>
    <scope>NUCLEOTIDE SEQUENCE [LARGE SCALE GENOMIC DNA]</scope>
    <source>
        <strain>ATCC 204508 / S288c</strain>
    </source>
</reference>
<reference key="3">
    <citation type="journal article" date="2014" name="G3 (Bethesda)">
        <title>The reference genome sequence of Saccharomyces cerevisiae: Then and now.</title>
        <authorList>
            <person name="Engel S.R."/>
            <person name="Dietrich F.S."/>
            <person name="Fisk D.G."/>
            <person name="Binkley G."/>
            <person name="Balakrishnan R."/>
            <person name="Costanzo M.C."/>
            <person name="Dwight S.S."/>
            <person name="Hitz B.C."/>
            <person name="Karra K."/>
            <person name="Nash R.S."/>
            <person name="Weng S."/>
            <person name="Wong E.D."/>
            <person name="Lloyd P."/>
            <person name="Skrzypek M.S."/>
            <person name="Miyasato S.R."/>
            <person name="Simison M."/>
            <person name="Cherry J.M."/>
        </authorList>
    </citation>
    <scope>GENOME REANNOTATION</scope>
    <scope>SEQUENCE REVISION TO 85-88</scope>
    <source>
        <strain>ATCC 204508 / S288c</strain>
    </source>
</reference>
<reference key="4">
    <citation type="journal article" date="2007" name="Proc. Natl. Acad. Sci. U.S.A.">
        <title>High-density yeast-tiling array reveals previously undiscovered introns and extensive regulation of meiotic splicing.</title>
        <authorList>
            <person name="Juneau K."/>
            <person name="Palm C."/>
            <person name="Miranda M."/>
            <person name="Davis R.W."/>
        </authorList>
    </citation>
    <scope>NUCLEOTIDE SEQUENCE [MRNA] OF 1-81</scope>
    <source>
        <strain>ATCC 201390 / BY4743</strain>
    </source>
</reference>
<reference key="5">
    <citation type="submission" date="2003-02" db="EMBL/GenBank/DDBJ databases">
        <title>YIL123W (SIM1) mRNA.</title>
        <authorList>
            <person name="Zhang Z."/>
            <person name="Dietrich F.S."/>
        </authorList>
    </citation>
    <scope>NUCLEOTIDE SEQUENCE [MRNA] OF 1-72</scope>
    <source>
        <strain>ATCC 204508 / S288c</strain>
    </source>
</reference>
<reference key="6">
    <citation type="journal article" date="1995" name="Curr. Biol.">
        <title>S-phase-promoting cyclin-dependent kinases prevent re-replication by inhibiting the transition of replication origins to a pre-replicative state.</title>
        <authorList>
            <person name="Dahmann C."/>
            <person name="Diffley J.F.X."/>
            <person name="Nasmyth K.A."/>
        </authorList>
    </citation>
    <scope>IDENTIFICATION</scope>
</reference>
<reference key="7">
    <citation type="journal article" date="2002" name="FEMS Microbiol. Lett.">
        <title>Dual cell wall/mitochondria localization of the 'SUN' family proteins.</title>
        <authorList>
            <person name="Velours G.M."/>
            <person name="Boucheron C."/>
            <person name="Manon S."/>
            <person name="Camougrand N.M."/>
        </authorList>
    </citation>
    <scope>SUBCELLULAR LOCATION</scope>
</reference>
<reference key="8">
    <citation type="journal article" date="2003" name="Nature">
        <title>Global analysis of protein expression in yeast.</title>
        <authorList>
            <person name="Ghaemmaghami S."/>
            <person name="Huh W.-K."/>
            <person name="Bower K."/>
            <person name="Howson R.W."/>
            <person name="Belle A."/>
            <person name="Dephoure N."/>
            <person name="O'Shea E.K."/>
            <person name="Weissman J.S."/>
        </authorList>
    </citation>
    <scope>LEVEL OF PROTEIN EXPRESSION [LARGE SCALE ANALYSIS]</scope>
</reference>
<reference key="9">
    <citation type="journal article" date="2013" name="PLoS ONE">
        <title>SUN family proteins Sun4p, Uth1p and Sim1p are secreted from Saccharomyces cerevisiae and produced dependently on oxygen level.</title>
        <authorList>
            <person name="Kuznetsov E."/>
            <person name="Kucerova H."/>
            <person name="Vachova L."/>
            <person name="Palkova Z."/>
        </authorList>
    </citation>
    <scope>SUBCELLULAR LOCATION</scope>
    <scope>INDUCTION</scope>
    <scope>DISRUPTION PHENOTYPE</scope>
    <scope>FUNCTION</scope>
</reference>
<feature type="signal peptide" evidence="1">
    <location>
        <begin position="1"/>
        <end position="19"/>
    </location>
</feature>
<feature type="chain" id="PRO_0000033465" description="Probable secreted beta-glucosidase SIM1">
    <location>
        <begin position="20"/>
        <end position="476"/>
    </location>
</feature>
<feature type="region of interest" description="Disordered" evidence="2">
    <location>
        <begin position="111"/>
        <end position="214"/>
    </location>
</feature>
<feature type="compositionally biased region" description="Low complexity" evidence="2">
    <location>
        <begin position="111"/>
        <end position="203"/>
    </location>
</feature>
<feature type="glycosylation site" description="N-linked (GlcNAc...) asparagine" evidence="1">
    <location>
        <position position="423"/>
    </location>
</feature>
<feature type="sequence variant" description="In strain: SK1." evidence="5">
    <location>
        <begin position="60"/>
        <end position="66"/>
    </location>
</feature>
<feature type="sequence variant" description="In strain: SK1." evidence="5">
    <location>
        <begin position="174"/>
        <end position="185"/>
    </location>
</feature>
<feature type="sequence conflict" description="In Ref. 2; CAA86869." evidence="7" ref="2">
    <original>ADSS</original>
    <variation>GIA</variation>
    <location>
        <begin position="85"/>
        <end position="88"/>
    </location>
</feature>
<comment type="function">
    <text evidence="6">Involved in the remodeling of the cell wall during the various phases of yeast culture development and under various environmental conditions. Required for the maintenance of the CLB5 kinase activity.</text>
</comment>
<comment type="subcellular location">
    <subcellularLocation>
        <location evidence="3 6">Secreted</location>
        <location evidence="3 6">Cell wall</location>
    </subcellularLocation>
    <text>Non-covalently bound to the cell wall.</text>
</comment>
<comment type="induction">
    <text evidence="6">Expression is repressed by anoxia. Expression is decreased during transition to slow growing or stationary phases.</text>
</comment>
<comment type="disruption phenotype">
    <text evidence="6">Leads to increased resistance to zymolyase treatment.</text>
</comment>
<comment type="miscellaneous">
    <text evidence="4">Present with 1800 molecules/cell in log phase SD medium.</text>
</comment>
<comment type="similarity">
    <text evidence="7">Belongs to the SUN family.</text>
</comment>